<reference key="1">
    <citation type="journal article" date="2002" name="DNA Res.">
        <title>Complete genome structure of the thermophilic cyanobacterium Thermosynechococcus elongatus BP-1.</title>
        <authorList>
            <person name="Nakamura Y."/>
            <person name="Kaneko T."/>
            <person name="Sato S."/>
            <person name="Ikeuchi M."/>
            <person name="Katoh H."/>
            <person name="Sasamoto S."/>
            <person name="Watanabe A."/>
            <person name="Iriguchi M."/>
            <person name="Kawashima K."/>
            <person name="Kimura T."/>
            <person name="Kishida Y."/>
            <person name="Kiyokawa C."/>
            <person name="Kohara M."/>
            <person name="Matsumoto M."/>
            <person name="Matsuno A."/>
            <person name="Nakazaki N."/>
            <person name="Shimpo S."/>
            <person name="Sugimoto M."/>
            <person name="Takeuchi C."/>
            <person name="Yamada M."/>
            <person name="Tabata S."/>
        </authorList>
    </citation>
    <scope>NUCLEOTIDE SEQUENCE [LARGE SCALE GENOMIC DNA]</scope>
    <source>
        <strain>NIES-2133 / IAM M-273 / BP-1</strain>
    </source>
</reference>
<gene>
    <name type="primary">ppc</name>
    <name type="ordered locus">tll1912</name>
</gene>
<name>CAPP_THEVB</name>
<keyword id="KW-0120">Carbon dioxide fixation</keyword>
<keyword id="KW-0456">Lyase</keyword>
<keyword id="KW-0460">Magnesium</keyword>
<keyword id="KW-1185">Reference proteome</keyword>
<feature type="chain" id="PRO_0000166640" description="Phosphoenolpyruvate carboxylase">
    <location>
        <begin position="1"/>
        <end position="1011"/>
    </location>
</feature>
<feature type="active site" evidence="1">
    <location>
        <position position="207"/>
    </location>
</feature>
<feature type="active site" evidence="1">
    <location>
        <position position="658"/>
    </location>
</feature>
<sequence length="1011" mass="116427">MTSVLDVTNRDRLIESESLAARTLQERLRLVEEVLVDVLAAESGQELVDLLRRLGALSSPEGHVLHAPEGELLKVIESLELNEAIRAARAFNLYFQIINIVEQHYEQQYNRERAAQEGLRRRSVMSEPISGVSGEGFPLPHTAANATDVRSGPSERLEHSLYEAIPATQQYGSFAWLFPRLQMLNVPPRHIQKLLDQLDIKLVFTAHPTEIVRQTIRDKQRRVARLLEQLDVLEGASPHLTDWNAQTLRAQLMEEIRLWWRTDELHQFKPEVLDEVEYTLHYFKEVIFAVIPKLYRRLEQSLHETFPALQPPRHRFCRFGSWVGGDRDGNPYVKPEVTWQTACYQRNLVLEEYIKSVERLINLLSLSLHWCDVLPDLLDSLEQDQRQLPSIYEQYAVRYRQEPYRLKLAYVLKRLQNTRDRNRALQTYCIRRNEAEELNNGQFYRHGEEFLAELLLIQRNLKETGLACRELDDLICQVEVFGFNLAALDIRQESTCHAEALNEITAYLGILPCPYTELSEAERTRWLLSELSTRRPLIPGELPFSDRTNEIIETFRMVRQLQQEFGTDLCNTYIISMSHEVSDLLEVLLFAKEAGLFDPATGASTLQAIPLFETVEDLKHAPAVLTQLFSLPFCRSYLGSNSTPFLQEVMLGYSDSNKDSGFLSSNWEIYKAQQQLQKIAESFGFQLRIFHGRGGSVGRGGGPAYAAILAQPAQTIKGRIKITEQGEVLASKYSLPELALFNLETVATAVIQASLLRSSIDEIEPWHEIMEELATRSRQCYRHLIYEQPEFIEFFNEVTPIQEISQLQISSRPTRRGGKKTLESLRAIPWVFSWTQTRFLLPAWYGVGTALKEFLEEKPAEHLSLLRYFYYKWPFFRMVISKVEMTLAKVDLEIARYYVQELSQPQNREAFCRLYDQIAQEYRLTTELVLTITGHERLLDGDPALQRSVQLRNRTIVPLGFLQVSLLKRLRQHNSQTTSGAILRSRYGRGELLRGALLTINGIAAGMRNTG</sequence>
<evidence type="ECO:0000250" key="1"/>
<evidence type="ECO:0000305" key="2"/>
<dbReference type="EC" id="4.1.1.31"/>
<dbReference type="EMBL" id="BA000039">
    <property type="protein sequence ID" value="BAC09464.1"/>
    <property type="molecule type" value="Genomic_DNA"/>
</dbReference>
<dbReference type="RefSeq" id="NP_682702.1">
    <property type="nucleotide sequence ID" value="NC_004113.1"/>
</dbReference>
<dbReference type="RefSeq" id="WP_011057749.1">
    <property type="nucleotide sequence ID" value="NC_004113.1"/>
</dbReference>
<dbReference type="SMR" id="P0A3X5"/>
<dbReference type="STRING" id="197221.gene:10748518"/>
<dbReference type="EnsemblBacteria" id="BAC09464">
    <property type="protein sequence ID" value="BAC09464"/>
    <property type="gene ID" value="BAC09464"/>
</dbReference>
<dbReference type="KEGG" id="tel:tll1912"/>
<dbReference type="PATRIC" id="fig|197221.4.peg.2000"/>
<dbReference type="eggNOG" id="COG2352">
    <property type="taxonomic scope" value="Bacteria"/>
</dbReference>
<dbReference type="Proteomes" id="UP000000440">
    <property type="component" value="Chromosome"/>
</dbReference>
<dbReference type="GO" id="GO:0005829">
    <property type="term" value="C:cytosol"/>
    <property type="evidence" value="ECO:0007669"/>
    <property type="project" value="TreeGrafter"/>
</dbReference>
<dbReference type="GO" id="GO:0000287">
    <property type="term" value="F:magnesium ion binding"/>
    <property type="evidence" value="ECO:0007669"/>
    <property type="project" value="UniProtKB-UniRule"/>
</dbReference>
<dbReference type="GO" id="GO:0008964">
    <property type="term" value="F:phosphoenolpyruvate carboxylase activity"/>
    <property type="evidence" value="ECO:0007669"/>
    <property type="project" value="UniProtKB-UniRule"/>
</dbReference>
<dbReference type="GO" id="GO:0015977">
    <property type="term" value="P:carbon fixation"/>
    <property type="evidence" value="ECO:0007669"/>
    <property type="project" value="UniProtKB-UniRule"/>
</dbReference>
<dbReference type="GO" id="GO:0006107">
    <property type="term" value="P:oxaloacetate metabolic process"/>
    <property type="evidence" value="ECO:0007669"/>
    <property type="project" value="UniProtKB-UniRule"/>
</dbReference>
<dbReference type="GO" id="GO:0006099">
    <property type="term" value="P:tricarboxylic acid cycle"/>
    <property type="evidence" value="ECO:0007669"/>
    <property type="project" value="InterPro"/>
</dbReference>
<dbReference type="Gene3D" id="1.20.1440.90">
    <property type="entry name" value="Phosphoenolpyruvate/pyruvate domain"/>
    <property type="match status" value="1"/>
</dbReference>
<dbReference type="HAMAP" id="MF_00595">
    <property type="entry name" value="PEPcase_type1"/>
    <property type="match status" value="1"/>
</dbReference>
<dbReference type="InterPro" id="IPR021135">
    <property type="entry name" value="PEP_COase"/>
</dbReference>
<dbReference type="InterPro" id="IPR022805">
    <property type="entry name" value="PEP_COase_bac/pln-type"/>
</dbReference>
<dbReference type="InterPro" id="IPR018129">
    <property type="entry name" value="PEP_COase_Lys_AS"/>
</dbReference>
<dbReference type="InterPro" id="IPR033129">
    <property type="entry name" value="PEPCASE_His_AS"/>
</dbReference>
<dbReference type="InterPro" id="IPR015813">
    <property type="entry name" value="Pyrv/PenolPyrv_kinase-like_dom"/>
</dbReference>
<dbReference type="NCBIfam" id="NF000584">
    <property type="entry name" value="PRK00009.1"/>
    <property type="match status" value="1"/>
</dbReference>
<dbReference type="PANTHER" id="PTHR30523">
    <property type="entry name" value="PHOSPHOENOLPYRUVATE CARBOXYLASE"/>
    <property type="match status" value="1"/>
</dbReference>
<dbReference type="PANTHER" id="PTHR30523:SF6">
    <property type="entry name" value="PHOSPHOENOLPYRUVATE CARBOXYLASE"/>
    <property type="match status" value="1"/>
</dbReference>
<dbReference type="Pfam" id="PF00311">
    <property type="entry name" value="PEPcase"/>
    <property type="match status" value="1"/>
</dbReference>
<dbReference type="PRINTS" id="PR00150">
    <property type="entry name" value="PEPCARBXLASE"/>
</dbReference>
<dbReference type="SUPFAM" id="SSF51621">
    <property type="entry name" value="Phosphoenolpyruvate/pyruvate domain"/>
    <property type="match status" value="1"/>
</dbReference>
<dbReference type="PROSITE" id="PS00781">
    <property type="entry name" value="PEPCASE_1"/>
    <property type="match status" value="1"/>
</dbReference>
<dbReference type="PROSITE" id="PS00393">
    <property type="entry name" value="PEPCASE_2"/>
    <property type="match status" value="1"/>
</dbReference>
<accession>P0A3X5</accession>
<accession>Q94QB2</accession>
<comment type="function">
    <text evidence="1">Forms oxaloacetate, a four-carbon dicarboxylic acid source for the tricarboxylic acid cycle.</text>
</comment>
<comment type="catalytic activity">
    <reaction>
        <text>oxaloacetate + phosphate = phosphoenolpyruvate + hydrogencarbonate</text>
        <dbReference type="Rhea" id="RHEA:28370"/>
        <dbReference type="ChEBI" id="CHEBI:16452"/>
        <dbReference type="ChEBI" id="CHEBI:17544"/>
        <dbReference type="ChEBI" id="CHEBI:43474"/>
        <dbReference type="ChEBI" id="CHEBI:58702"/>
        <dbReference type="EC" id="4.1.1.31"/>
    </reaction>
</comment>
<comment type="cofactor">
    <cofactor evidence="1">
        <name>Mg(2+)</name>
        <dbReference type="ChEBI" id="CHEBI:18420"/>
    </cofactor>
</comment>
<comment type="similarity">
    <text evidence="2">Belongs to the PEPCase type 1 family.</text>
</comment>
<protein>
    <recommendedName>
        <fullName>Phosphoenolpyruvate carboxylase</fullName>
        <shortName>PEPC</shortName>
        <shortName>PEPCase</shortName>
        <ecNumber>4.1.1.31</ecNumber>
    </recommendedName>
</protein>
<proteinExistence type="inferred from homology"/>
<organism>
    <name type="scientific">Thermosynechococcus vestitus (strain NIES-2133 / IAM M-273 / BP-1)</name>
    <dbReference type="NCBI Taxonomy" id="197221"/>
    <lineage>
        <taxon>Bacteria</taxon>
        <taxon>Bacillati</taxon>
        <taxon>Cyanobacteriota</taxon>
        <taxon>Cyanophyceae</taxon>
        <taxon>Acaryochloridales</taxon>
        <taxon>Thermosynechococcaceae</taxon>
        <taxon>Thermosynechococcus</taxon>
    </lineage>
</organism>